<sequence>MAPPPAVVAHPLSSQATGLDMVHEFNQKLTKSDEHTWESFKFAPIRESTVSRAMTRRYFEDLDKYAESDVVIIGAGSCGLSAAYVLAKSRPDLKIAIVEAGVAPGGGAWLGGQLFSAMVMRKPAEQFLEEIGVPYEDEGDYVVVKHAALFTSTLMSQVLKFPNVKLFNATAVEDLITRKDAQGNLRIAGVVTNWTLVSMHHDDQSCMDPNTINAPIIISTTGHDGPFGAFSVKRLVSMNAIEKLGGMRGLDMGLAEDAIVKRTREIVPGLVVGGMELSEVDGANRMGPTFGAMALSGVKAAETVLEVFDTRKKQNQE</sequence>
<comment type="function">
    <text evidence="1">Involved in biosynthesis of the thiamine precursor thiazole. Catalyzes the conversion of NAD and glycine to adenosine diphosphate 5-(2-hydroxyethyl)-4-methylthiazole-2-carboxylic acid (ADT), an adenylated thiazole intermediate. The reaction includes an iron-dependent sulfide transfer from a conserved cysteine residue of the protein to a thiazole intermediate. The enzyme can only undergo a single turnover, which suggests it is a suicide enzyme. May have additional roles in adaptation to various stress conditions and in DNA damage tolerance.</text>
</comment>
<comment type="catalytic activity">
    <reaction evidence="1">
        <text>[ADP-thiazole synthase]-L-cysteine + glycine + NAD(+) = [ADP-thiazole synthase]-dehydroalanine + ADP-5-ethyl-4-methylthiazole-2-carboxylate + nicotinamide + 3 H2O + 2 H(+)</text>
        <dbReference type="Rhea" id="RHEA:55708"/>
        <dbReference type="Rhea" id="RHEA-COMP:14264"/>
        <dbReference type="Rhea" id="RHEA-COMP:14265"/>
        <dbReference type="ChEBI" id="CHEBI:15377"/>
        <dbReference type="ChEBI" id="CHEBI:15378"/>
        <dbReference type="ChEBI" id="CHEBI:17154"/>
        <dbReference type="ChEBI" id="CHEBI:29950"/>
        <dbReference type="ChEBI" id="CHEBI:57305"/>
        <dbReference type="ChEBI" id="CHEBI:57540"/>
        <dbReference type="ChEBI" id="CHEBI:90873"/>
        <dbReference type="ChEBI" id="CHEBI:139151"/>
        <dbReference type="EC" id="2.4.2.60"/>
    </reaction>
</comment>
<comment type="cofactor">
    <cofactor evidence="1">
        <name>Fe cation</name>
        <dbReference type="ChEBI" id="CHEBI:24875"/>
    </cofactor>
    <text evidence="1">Binds 1 Fe cation per subunit.</text>
</comment>
<comment type="subunit">
    <text evidence="1">Homooctamer.</text>
</comment>
<comment type="subcellular location">
    <subcellularLocation>
        <location evidence="1">Cytoplasm</location>
    </subcellularLocation>
    <subcellularLocation>
        <location evidence="1">Nucleus</location>
    </subcellularLocation>
</comment>
<comment type="PTM">
    <text evidence="1">During the catalytic reaction, a sulfide is transferred from Cys-206 to a reaction intermediate, generating a dehydroalanine residue.</text>
</comment>
<comment type="similarity">
    <text evidence="1">Belongs to the THI4 family.</text>
</comment>
<feature type="chain" id="PRO_0000415882" description="Thiamine thiazole synthase">
    <location>
        <begin position="1"/>
        <end position="317"/>
    </location>
</feature>
<feature type="binding site" evidence="1">
    <location>
        <position position="78"/>
    </location>
    <ligand>
        <name>substrate</name>
    </ligand>
</feature>
<feature type="binding site" evidence="1">
    <location>
        <begin position="99"/>
        <end position="100"/>
    </location>
    <ligand>
        <name>substrate</name>
    </ligand>
</feature>
<feature type="binding site" evidence="1">
    <location>
        <position position="107"/>
    </location>
    <ligand>
        <name>substrate</name>
    </ligand>
</feature>
<feature type="binding site" evidence="1">
    <location>
        <position position="172"/>
    </location>
    <ligand>
        <name>substrate</name>
    </ligand>
</feature>
<feature type="binding site" evidence="1">
    <location>
        <position position="208"/>
    </location>
    <ligand>
        <name>substrate</name>
    </ligand>
</feature>
<feature type="binding site" evidence="1">
    <location>
        <position position="223"/>
    </location>
    <ligand>
        <name>substrate</name>
    </ligand>
</feature>
<feature type="binding site" evidence="1">
    <location>
        <position position="275"/>
    </location>
    <ligand>
        <name>substrate</name>
    </ligand>
</feature>
<feature type="binding site" evidence="1">
    <location>
        <begin position="285"/>
        <end position="287"/>
    </location>
    <ligand>
        <name>substrate</name>
    </ligand>
</feature>
<feature type="modified residue" description="2,3-didehydroalanine (Cys)" evidence="1">
    <location>
        <position position="206"/>
    </location>
</feature>
<accession>Q3V7I4</accession>
<dbReference type="EC" id="2.4.2.60" evidence="1"/>
<dbReference type="EMBL" id="CR382127">
    <property type="protein sequence ID" value="CAG83845.1"/>
    <property type="molecule type" value="Genomic_DNA"/>
</dbReference>
<dbReference type="RefSeq" id="XP_499918.1">
    <property type="nucleotide sequence ID" value="XM_499918.1"/>
</dbReference>
<dbReference type="SMR" id="Q3V7I4"/>
<dbReference type="FunCoup" id="Q3V7I4">
    <property type="interactions" value="877"/>
</dbReference>
<dbReference type="STRING" id="284591.Q3V7I4"/>
<dbReference type="EnsemblFungi" id="CAG83845">
    <property type="protein sequence ID" value="CAG83845"/>
    <property type="gene ID" value="YALI0_A09768g"/>
</dbReference>
<dbReference type="KEGG" id="yli:2905790"/>
<dbReference type="VEuPathDB" id="FungiDB:YALI0_A09768g"/>
<dbReference type="HOGENOM" id="CLU_053727_0_0_1"/>
<dbReference type="InParanoid" id="Q3V7I4"/>
<dbReference type="OMA" id="MFPRIVV"/>
<dbReference type="OrthoDB" id="107047at4891"/>
<dbReference type="Proteomes" id="UP000001300">
    <property type="component" value="Chromosome A"/>
</dbReference>
<dbReference type="GO" id="GO:0005829">
    <property type="term" value="C:cytosol"/>
    <property type="evidence" value="ECO:0007669"/>
    <property type="project" value="UniProtKB-UniRule"/>
</dbReference>
<dbReference type="GO" id="GO:0005634">
    <property type="term" value="C:nucleus"/>
    <property type="evidence" value="ECO:0007669"/>
    <property type="project" value="UniProtKB-SubCell"/>
</dbReference>
<dbReference type="GO" id="GO:0160205">
    <property type="term" value="F:cysteine-dependent adenosine diphosphate thiazole synthase activity"/>
    <property type="evidence" value="ECO:0007669"/>
    <property type="project" value="UniProtKB-EC"/>
</dbReference>
<dbReference type="GO" id="GO:0008198">
    <property type="term" value="F:ferrous iron binding"/>
    <property type="evidence" value="ECO:0007669"/>
    <property type="project" value="EnsemblFungi"/>
</dbReference>
<dbReference type="GO" id="GO:0005506">
    <property type="term" value="F:iron ion binding"/>
    <property type="evidence" value="ECO:0000318"/>
    <property type="project" value="GO_Central"/>
</dbReference>
<dbReference type="GO" id="GO:0000002">
    <property type="term" value="P:mitochondrial genome maintenance"/>
    <property type="evidence" value="ECO:0007669"/>
    <property type="project" value="EnsemblFungi"/>
</dbReference>
<dbReference type="GO" id="GO:0009228">
    <property type="term" value="P:thiamine biosynthetic process"/>
    <property type="evidence" value="ECO:0007669"/>
    <property type="project" value="UniProtKB-UniRule"/>
</dbReference>
<dbReference type="GO" id="GO:0052837">
    <property type="term" value="P:thiazole biosynthetic process"/>
    <property type="evidence" value="ECO:0000318"/>
    <property type="project" value="GO_Central"/>
</dbReference>
<dbReference type="Gene3D" id="6.10.250.2840">
    <property type="match status" value="1"/>
</dbReference>
<dbReference type="Gene3D" id="3.50.50.60">
    <property type="entry name" value="FAD/NAD(P)-binding domain"/>
    <property type="match status" value="1"/>
</dbReference>
<dbReference type="HAMAP" id="MF_03158">
    <property type="entry name" value="THI4"/>
    <property type="match status" value="1"/>
</dbReference>
<dbReference type="InterPro" id="IPR036188">
    <property type="entry name" value="FAD/NAD-bd_sf"/>
</dbReference>
<dbReference type="InterPro" id="IPR027495">
    <property type="entry name" value="Sti35"/>
</dbReference>
<dbReference type="InterPro" id="IPR002922">
    <property type="entry name" value="Thi4_fam"/>
</dbReference>
<dbReference type="NCBIfam" id="TIGR00292">
    <property type="entry name" value="sulfide-dependent adenosine diphosphate thiazole synthase"/>
    <property type="match status" value="1"/>
</dbReference>
<dbReference type="PANTHER" id="PTHR43422">
    <property type="entry name" value="THIAMINE THIAZOLE SYNTHASE"/>
    <property type="match status" value="1"/>
</dbReference>
<dbReference type="PANTHER" id="PTHR43422:SF3">
    <property type="entry name" value="THIAMINE THIAZOLE SYNTHASE"/>
    <property type="match status" value="1"/>
</dbReference>
<dbReference type="Pfam" id="PF01946">
    <property type="entry name" value="Thi4"/>
    <property type="match status" value="1"/>
</dbReference>
<dbReference type="SUPFAM" id="SSF51905">
    <property type="entry name" value="FAD/NAD(P)-binding domain"/>
    <property type="match status" value="1"/>
</dbReference>
<name>THI4_YARLI</name>
<keyword id="KW-0963">Cytoplasm</keyword>
<keyword id="KW-0408">Iron</keyword>
<keyword id="KW-0479">Metal-binding</keyword>
<keyword id="KW-0520">NAD</keyword>
<keyword id="KW-0539">Nucleus</keyword>
<keyword id="KW-1185">Reference proteome</keyword>
<keyword id="KW-0784">Thiamine biosynthesis</keyword>
<keyword id="KW-0808">Transferase</keyword>
<evidence type="ECO:0000255" key="1">
    <source>
        <dbReference type="HAMAP-Rule" id="MF_03158"/>
    </source>
</evidence>
<organism>
    <name type="scientific">Yarrowia lipolytica (strain CLIB 122 / E 150)</name>
    <name type="common">Yeast</name>
    <name type="synonym">Candida lipolytica</name>
    <dbReference type="NCBI Taxonomy" id="284591"/>
    <lineage>
        <taxon>Eukaryota</taxon>
        <taxon>Fungi</taxon>
        <taxon>Dikarya</taxon>
        <taxon>Ascomycota</taxon>
        <taxon>Saccharomycotina</taxon>
        <taxon>Dipodascomycetes</taxon>
        <taxon>Dipodascales</taxon>
        <taxon>Dipodascales incertae sedis</taxon>
        <taxon>Yarrowia</taxon>
    </lineage>
</organism>
<proteinExistence type="inferred from homology"/>
<reference key="1">
    <citation type="journal article" date="2004" name="Nature">
        <title>Genome evolution in yeasts.</title>
        <authorList>
            <person name="Dujon B."/>
            <person name="Sherman D."/>
            <person name="Fischer G."/>
            <person name="Durrens P."/>
            <person name="Casaregola S."/>
            <person name="Lafontaine I."/>
            <person name="de Montigny J."/>
            <person name="Marck C."/>
            <person name="Neuveglise C."/>
            <person name="Talla E."/>
            <person name="Goffard N."/>
            <person name="Frangeul L."/>
            <person name="Aigle M."/>
            <person name="Anthouard V."/>
            <person name="Babour A."/>
            <person name="Barbe V."/>
            <person name="Barnay S."/>
            <person name="Blanchin S."/>
            <person name="Beckerich J.-M."/>
            <person name="Beyne E."/>
            <person name="Bleykasten C."/>
            <person name="Boisrame A."/>
            <person name="Boyer J."/>
            <person name="Cattolico L."/>
            <person name="Confanioleri F."/>
            <person name="de Daruvar A."/>
            <person name="Despons L."/>
            <person name="Fabre E."/>
            <person name="Fairhead C."/>
            <person name="Ferry-Dumazet H."/>
            <person name="Groppi A."/>
            <person name="Hantraye F."/>
            <person name="Hennequin C."/>
            <person name="Jauniaux N."/>
            <person name="Joyet P."/>
            <person name="Kachouri R."/>
            <person name="Kerrest A."/>
            <person name="Koszul R."/>
            <person name="Lemaire M."/>
            <person name="Lesur I."/>
            <person name="Ma L."/>
            <person name="Muller H."/>
            <person name="Nicaud J.-M."/>
            <person name="Nikolski M."/>
            <person name="Oztas S."/>
            <person name="Ozier-Kalogeropoulos O."/>
            <person name="Pellenz S."/>
            <person name="Potier S."/>
            <person name="Richard G.-F."/>
            <person name="Straub M.-L."/>
            <person name="Suleau A."/>
            <person name="Swennen D."/>
            <person name="Tekaia F."/>
            <person name="Wesolowski-Louvel M."/>
            <person name="Westhof E."/>
            <person name="Wirth B."/>
            <person name="Zeniou-Meyer M."/>
            <person name="Zivanovic Y."/>
            <person name="Bolotin-Fukuhara M."/>
            <person name="Thierry A."/>
            <person name="Bouchier C."/>
            <person name="Caudron B."/>
            <person name="Scarpelli C."/>
            <person name="Gaillardin C."/>
            <person name="Weissenbach J."/>
            <person name="Wincker P."/>
            <person name="Souciet J.-L."/>
        </authorList>
    </citation>
    <scope>NUCLEOTIDE SEQUENCE [LARGE SCALE GENOMIC DNA]</scope>
    <source>
        <strain>CLIB 122 / E 150</strain>
    </source>
</reference>
<gene>
    <name evidence="1" type="primary">THI4</name>
    <name type="ordered locus">YALI0A09768g</name>
</gene>
<protein>
    <recommendedName>
        <fullName evidence="1">Thiamine thiazole synthase</fullName>
        <ecNumber evidence="1">2.4.2.60</ecNumber>
    </recommendedName>
    <alternativeName>
        <fullName evidence="1">Thiazole biosynthetic enzyme</fullName>
    </alternativeName>
</protein>